<feature type="signal peptide" evidence="1">
    <location>
        <begin position="1"/>
        <end position="17"/>
    </location>
</feature>
<feature type="chain" id="PRO_0000023471" description="Putative gastrointestinal growth factor xP4">
    <location>
        <begin position="18"/>
        <end position="224"/>
    </location>
</feature>
<feature type="domain" description="P-type 1" evidence="2">
    <location>
        <begin position="25"/>
        <end position="68"/>
    </location>
</feature>
<feature type="domain" description="P-type 2" evidence="2">
    <location>
        <begin position="73"/>
        <end position="117"/>
    </location>
</feature>
<feature type="domain" description="P-type 3" evidence="2">
    <location>
        <begin position="123"/>
        <end position="167"/>
    </location>
</feature>
<feature type="domain" description="P-type 4" evidence="2">
    <location>
        <begin position="173"/>
        <end position="216"/>
    </location>
</feature>
<feature type="glycosylation site" description="N-linked (GlcNAc...) asparagine" evidence="1">
    <location>
        <position position="104"/>
    </location>
</feature>
<feature type="disulfide bond" evidence="2">
    <location>
        <begin position="27"/>
        <end position="53"/>
    </location>
</feature>
<feature type="disulfide bond" evidence="2">
    <location>
        <begin position="37"/>
        <end position="52"/>
    </location>
</feature>
<feature type="disulfide bond" evidence="2">
    <location>
        <begin position="47"/>
        <end position="64"/>
    </location>
</feature>
<feature type="disulfide bond" evidence="2">
    <location>
        <begin position="75"/>
        <end position="102"/>
    </location>
</feature>
<feature type="disulfide bond" evidence="2">
    <location>
        <begin position="86"/>
        <end position="101"/>
    </location>
</feature>
<feature type="disulfide bond" evidence="2">
    <location>
        <begin position="96"/>
        <end position="113"/>
    </location>
</feature>
<feature type="disulfide bond" evidence="2">
    <location>
        <begin position="125"/>
        <end position="152"/>
    </location>
</feature>
<feature type="disulfide bond" evidence="2">
    <location>
        <begin position="136"/>
        <end position="151"/>
    </location>
</feature>
<feature type="disulfide bond" evidence="2">
    <location>
        <begin position="146"/>
        <end position="163"/>
    </location>
</feature>
<feature type="disulfide bond" evidence="2">
    <location>
        <begin position="175"/>
        <end position="201"/>
    </location>
</feature>
<feature type="disulfide bond" evidence="2">
    <location>
        <begin position="185"/>
        <end position="200"/>
    </location>
</feature>
<feature type="disulfide bond" evidence="2">
    <location>
        <begin position="195"/>
        <end position="212"/>
    </location>
</feature>
<sequence>MANSVFWAIAVALVLGAEAYMPLDYRCGVKPKSRDNCGPPGISPDECVKKGCCFDDSDPDSIWCYTPWKFEDTICNPAEPKARVNCGYPGITSQDCDKKGCCFNDTIPNVVWCYQPIIEAVERDCSAVEPKKRVNCGPPGVSPDECIKNGCCFNSDVGGVPWCFKPEIKKELLQCAVLPKARINCGYPDITMDQCYKKGCCYDSSESDSIWCFYPDIEDVTIIE</sequence>
<keyword id="KW-1015">Disulfide bond</keyword>
<keyword id="KW-0325">Glycoprotein</keyword>
<keyword id="KW-0339">Growth factor</keyword>
<keyword id="KW-1185">Reference proteome</keyword>
<keyword id="KW-0677">Repeat</keyword>
<keyword id="KW-0964">Secreted</keyword>
<keyword id="KW-0732">Signal</keyword>
<accession>Q00223</accession>
<evidence type="ECO:0000255" key="1"/>
<evidence type="ECO:0000255" key="2">
    <source>
        <dbReference type="PROSITE-ProRule" id="PRU00779"/>
    </source>
</evidence>
<proteinExistence type="evidence at transcript level"/>
<gene>
    <name type="primary">p4</name>
</gene>
<protein>
    <recommendedName>
        <fullName>Putative gastrointestinal growth factor xP4</fullName>
    </recommendedName>
    <alternativeName>
        <fullName>TFF p4.1</fullName>
    </alternativeName>
</protein>
<name>XP4_XENLA</name>
<reference key="1">
    <citation type="journal article" date="1991" name="J. Biol. Chem.">
        <title>xP1 and xP4. P-domain peptides expressed in Xenopus laevis stomach mucosa.</title>
        <authorList>
            <person name="Hauser F."/>
            <person name="Hoffmann W."/>
        </authorList>
    </citation>
    <scope>NUCLEOTIDE SEQUENCE [MRNA]</scope>
    <source>
        <tissue>Stomach</tissue>
    </source>
</reference>
<reference key="2">
    <citation type="journal article" date="1999" name="Biochim. Biophys. Acta">
        <title>Structure of the Xenopus laevis TFF-gene xP4.1, differentially expressed to its duplicated homolog xP4.2.</title>
        <authorList>
            <person name="Botzler C."/>
            <person name="Oertel M."/>
            <person name="Hinz M."/>
            <person name="Hoffmann W."/>
        </authorList>
    </citation>
    <scope>NUCLEOTIDE SEQUENCE [GENOMIC DNA]</scope>
</reference>
<comment type="function">
    <text>May act as a growth factor.</text>
</comment>
<comment type="subcellular location">
    <subcellularLocation>
        <location>Secreted</location>
    </subcellularLocation>
</comment>
<comment type="tissue specificity">
    <text>Stomach mucosa.</text>
</comment>
<comment type="PTM">
    <text>Glycosylated.</text>
</comment>
<organism>
    <name type="scientific">Xenopus laevis</name>
    <name type="common">African clawed frog</name>
    <dbReference type="NCBI Taxonomy" id="8355"/>
    <lineage>
        <taxon>Eukaryota</taxon>
        <taxon>Metazoa</taxon>
        <taxon>Chordata</taxon>
        <taxon>Craniata</taxon>
        <taxon>Vertebrata</taxon>
        <taxon>Euteleostomi</taxon>
        <taxon>Amphibia</taxon>
        <taxon>Batrachia</taxon>
        <taxon>Anura</taxon>
        <taxon>Pipoidea</taxon>
        <taxon>Pipidae</taxon>
        <taxon>Xenopodinae</taxon>
        <taxon>Xenopus</taxon>
        <taxon>Xenopus</taxon>
    </lineage>
</organism>
<dbReference type="EMBL" id="M75034">
    <property type="protein sequence ID" value="AAA50003.1"/>
    <property type="molecule type" value="mRNA"/>
</dbReference>
<dbReference type="EMBL" id="AJ249172">
    <property type="protein sequence ID" value="CAB65600.1"/>
    <property type="molecule type" value="Genomic_DNA"/>
</dbReference>
<dbReference type="EMBL" id="AJ249175">
    <property type="protein sequence ID" value="CAB65600.1"/>
    <property type="status" value="JOINED"/>
    <property type="molecule type" value="Genomic_DNA"/>
</dbReference>
<dbReference type="EMBL" id="AJ249176">
    <property type="protein sequence ID" value="CAB65600.1"/>
    <property type="status" value="JOINED"/>
    <property type="molecule type" value="Genomic_DNA"/>
</dbReference>
<dbReference type="EMBL" id="AJ249177">
    <property type="protein sequence ID" value="CAB65600.1"/>
    <property type="status" value="JOINED"/>
    <property type="molecule type" value="Genomic_DNA"/>
</dbReference>
<dbReference type="PIR" id="B40850">
    <property type="entry name" value="B40850"/>
</dbReference>
<dbReference type="RefSeq" id="NP_001079243.1">
    <property type="nucleotide sequence ID" value="NM_001085774.1"/>
</dbReference>
<dbReference type="SMR" id="Q00223"/>
<dbReference type="GlyCosmos" id="Q00223">
    <property type="glycosylation" value="1 site, No reported glycans"/>
</dbReference>
<dbReference type="GeneID" id="378510"/>
<dbReference type="KEGG" id="xla:378510"/>
<dbReference type="AGR" id="Xenbase:XB-GENE-5824171"/>
<dbReference type="CTD" id="378510"/>
<dbReference type="Xenbase" id="XB-GENE-5824171">
    <property type="gene designation" value="tff3.8.S"/>
</dbReference>
<dbReference type="OMA" id="CVMDRSA"/>
<dbReference type="OrthoDB" id="10051464at2759"/>
<dbReference type="Proteomes" id="UP000186698">
    <property type="component" value="Chromosome 2S"/>
</dbReference>
<dbReference type="Bgee" id="378510">
    <property type="expression patterns" value="Expressed in stomach and 10 other cell types or tissues"/>
</dbReference>
<dbReference type="GO" id="GO:0005615">
    <property type="term" value="C:extracellular space"/>
    <property type="evidence" value="ECO:0000318"/>
    <property type="project" value="GO_Central"/>
</dbReference>
<dbReference type="GO" id="GO:0008083">
    <property type="term" value="F:growth factor activity"/>
    <property type="evidence" value="ECO:0007669"/>
    <property type="project" value="UniProtKB-KW"/>
</dbReference>
<dbReference type="GO" id="GO:0030277">
    <property type="term" value="P:maintenance of gastrointestinal epithelium"/>
    <property type="evidence" value="ECO:0000318"/>
    <property type="project" value="GO_Central"/>
</dbReference>
<dbReference type="CDD" id="cd00111">
    <property type="entry name" value="Trefoil"/>
    <property type="match status" value="4"/>
</dbReference>
<dbReference type="FunFam" id="4.10.110.10:FF:000006">
    <property type="entry name" value="Trefoil factor 1"/>
    <property type="match status" value="4"/>
</dbReference>
<dbReference type="Gene3D" id="4.10.110.10">
    <property type="entry name" value="Spasmolytic Protein, domain 1"/>
    <property type="match status" value="4"/>
</dbReference>
<dbReference type="InterPro" id="IPR017994">
    <property type="entry name" value="P_trefoil_chordata"/>
</dbReference>
<dbReference type="InterPro" id="IPR017957">
    <property type="entry name" value="P_trefoil_CS"/>
</dbReference>
<dbReference type="InterPro" id="IPR000519">
    <property type="entry name" value="P_trefoil_dom"/>
</dbReference>
<dbReference type="InterPro" id="IPR044913">
    <property type="entry name" value="P_trefoil_dom_sf"/>
</dbReference>
<dbReference type="PANTHER" id="PTHR13826:SF22">
    <property type="entry name" value="GASTROINTESTINAL GROWTH FACTOR XP4-RELATED"/>
    <property type="match status" value="1"/>
</dbReference>
<dbReference type="PANTHER" id="PTHR13826">
    <property type="entry name" value="INTESTINAL TREFOIL FACTOR-RELATED"/>
    <property type="match status" value="1"/>
</dbReference>
<dbReference type="Pfam" id="PF00088">
    <property type="entry name" value="Trefoil"/>
    <property type="match status" value="4"/>
</dbReference>
<dbReference type="PRINTS" id="PR00680">
    <property type="entry name" value="PTREFOIL"/>
</dbReference>
<dbReference type="SMART" id="SM00018">
    <property type="entry name" value="PD"/>
    <property type="match status" value="4"/>
</dbReference>
<dbReference type="SUPFAM" id="SSF57492">
    <property type="entry name" value="Trefoil"/>
    <property type="match status" value="4"/>
</dbReference>
<dbReference type="PROSITE" id="PS00025">
    <property type="entry name" value="P_TREFOIL_1"/>
    <property type="match status" value="4"/>
</dbReference>
<dbReference type="PROSITE" id="PS51448">
    <property type="entry name" value="P_TREFOIL_2"/>
    <property type="match status" value="4"/>
</dbReference>